<organism>
    <name type="scientific">Helicobacter acinonychis (strain Sheeba)</name>
    <dbReference type="NCBI Taxonomy" id="382638"/>
    <lineage>
        <taxon>Bacteria</taxon>
        <taxon>Pseudomonadati</taxon>
        <taxon>Campylobacterota</taxon>
        <taxon>Epsilonproteobacteria</taxon>
        <taxon>Campylobacterales</taxon>
        <taxon>Helicobacteraceae</taxon>
        <taxon>Helicobacter</taxon>
    </lineage>
</organism>
<sequence length="234" mass="25250">MAKKVFKRLEKLFSKIQNDKVYGVEQGVGAVKSLASAKFDETVEVALRLGVDPRHADQMVRGAVVLPHGTGKKVRVAVFAKDIKQDEAKNAGADVVGGDDLAEEIKNGRIDFDMVIATPDMMAVVGKVGRILGPKGLMPNPKTGTVTMDIAKAVTNAKSGQVNFKVDKKGNIHAPIGKVSFPEEKIKENMLELVKTINRLKPNSAKGKYIRNAALSLTMSPSVSLDAQELMDIK</sequence>
<name>RL1_HELAH</name>
<protein>
    <recommendedName>
        <fullName evidence="1">Large ribosomal subunit protein uL1</fullName>
    </recommendedName>
    <alternativeName>
        <fullName evidence="2">50S ribosomal protein L1</fullName>
    </alternativeName>
</protein>
<accession>Q17VN3</accession>
<feature type="chain" id="PRO_0000308021" description="Large ribosomal subunit protein uL1">
    <location>
        <begin position="1"/>
        <end position="234"/>
    </location>
</feature>
<proteinExistence type="inferred from homology"/>
<comment type="function">
    <text evidence="1">Binds directly to 23S rRNA. The L1 stalk is quite mobile in the ribosome, and is involved in E site tRNA release.</text>
</comment>
<comment type="function">
    <text evidence="1">Protein L1 is also a translational repressor protein, it controls the translation of the L11 operon by binding to its mRNA.</text>
</comment>
<comment type="subunit">
    <text evidence="1">Part of the 50S ribosomal subunit.</text>
</comment>
<comment type="similarity">
    <text evidence="1">Belongs to the universal ribosomal protein uL1 family.</text>
</comment>
<evidence type="ECO:0000255" key="1">
    <source>
        <dbReference type="HAMAP-Rule" id="MF_01318"/>
    </source>
</evidence>
<evidence type="ECO:0000305" key="2"/>
<dbReference type="EMBL" id="AM260522">
    <property type="protein sequence ID" value="CAK00293.1"/>
    <property type="molecule type" value="Genomic_DNA"/>
</dbReference>
<dbReference type="RefSeq" id="WP_011578376.1">
    <property type="nucleotide sequence ID" value="NC_008229.1"/>
</dbReference>
<dbReference type="SMR" id="Q17VN3"/>
<dbReference type="STRING" id="382638.Hac_1581"/>
<dbReference type="GeneID" id="31758833"/>
<dbReference type="KEGG" id="hac:Hac_1581"/>
<dbReference type="eggNOG" id="COG0081">
    <property type="taxonomic scope" value="Bacteria"/>
</dbReference>
<dbReference type="HOGENOM" id="CLU_062853_0_0_7"/>
<dbReference type="OrthoDB" id="9803740at2"/>
<dbReference type="BioCyc" id="HACI382638:HAC_RS06660-MONOMER"/>
<dbReference type="Proteomes" id="UP000000775">
    <property type="component" value="Chromosome"/>
</dbReference>
<dbReference type="GO" id="GO:0022625">
    <property type="term" value="C:cytosolic large ribosomal subunit"/>
    <property type="evidence" value="ECO:0007669"/>
    <property type="project" value="TreeGrafter"/>
</dbReference>
<dbReference type="GO" id="GO:0019843">
    <property type="term" value="F:rRNA binding"/>
    <property type="evidence" value="ECO:0007669"/>
    <property type="project" value="UniProtKB-UniRule"/>
</dbReference>
<dbReference type="GO" id="GO:0003735">
    <property type="term" value="F:structural constituent of ribosome"/>
    <property type="evidence" value="ECO:0007669"/>
    <property type="project" value="InterPro"/>
</dbReference>
<dbReference type="GO" id="GO:0000049">
    <property type="term" value="F:tRNA binding"/>
    <property type="evidence" value="ECO:0007669"/>
    <property type="project" value="UniProtKB-KW"/>
</dbReference>
<dbReference type="GO" id="GO:0006417">
    <property type="term" value="P:regulation of translation"/>
    <property type="evidence" value="ECO:0007669"/>
    <property type="project" value="UniProtKB-KW"/>
</dbReference>
<dbReference type="GO" id="GO:0006412">
    <property type="term" value="P:translation"/>
    <property type="evidence" value="ECO:0007669"/>
    <property type="project" value="UniProtKB-UniRule"/>
</dbReference>
<dbReference type="CDD" id="cd00403">
    <property type="entry name" value="Ribosomal_L1"/>
    <property type="match status" value="1"/>
</dbReference>
<dbReference type="FunFam" id="3.40.50.790:FF:000001">
    <property type="entry name" value="50S ribosomal protein L1"/>
    <property type="match status" value="1"/>
</dbReference>
<dbReference type="Gene3D" id="3.30.190.20">
    <property type="match status" value="1"/>
</dbReference>
<dbReference type="Gene3D" id="3.40.50.790">
    <property type="match status" value="1"/>
</dbReference>
<dbReference type="HAMAP" id="MF_01318_B">
    <property type="entry name" value="Ribosomal_uL1_B"/>
    <property type="match status" value="1"/>
</dbReference>
<dbReference type="InterPro" id="IPR005878">
    <property type="entry name" value="Ribosom_uL1_bac-type"/>
</dbReference>
<dbReference type="InterPro" id="IPR002143">
    <property type="entry name" value="Ribosomal_uL1"/>
</dbReference>
<dbReference type="InterPro" id="IPR023674">
    <property type="entry name" value="Ribosomal_uL1-like"/>
</dbReference>
<dbReference type="InterPro" id="IPR028364">
    <property type="entry name" value="Ribosomal_uL1/biogenesis"/>
</dbReference>
<dbReference type="InterPro" id="IPR016095">
    <property type="entry name" value="Ribosomal_uL1_3-a/b-sand"/>
</dbReference>
<dbReference type="InterPro" id="IPR023673">
    <property type="entry name" value="Ribosomal_uL1_CS"/>
</dbReference>
<dbReference type="NCBIfam" id="TIGR01169">
    <property type="entry name" value="rplA_bact"/>
    <property type="match status" value="1"/>
</dbReference>
<dbReference type="PANTHER" id="PTHR36427">
    <property type="entry name" value="54S RIBOSOMAL PROTEIN L1, MITOCHONDRIAL"/>
    <property type="match status" value="1"/>
</dbReference>
<dbReference type="PANTHER" id="PTHR36427:SF3">
    <property type="entry name" value="LARGE RIBOSOMAL SUBUNIT PROTEIN UL1M"/>
    <property type="match status" value="1"/>
</dbReference>
<dbReference type="Pfam" id="PF00687">
    <property type="entry name" value="Ribosomal_L1"/>
    <property type="match status" value="1"/>
</dbReference>
<dbReference type="PIRSF" id="PIRSF002155">
    <property type="entry name" value="Ribosomal_L1"/>
    <property type="match status" value="1"/>
</dbReference>
<dbReference type="SUPFAM" id="SSF56808">
    <property type="entry name" value="Ribosomal protein L1"/>
    <property type="match status" value="1"/>
</dbReference>
<dbReference type="PROSITE" id="PS01199">
    <property type="entry name" value="RIBOSOMAL_L1"/>
    <property type="match status" value="1"/>
</dbReference>
<keyword id="KW-0678">Repressor</keyword>
<keyword id="KW-0687">Ribonucleoprotein</keyword>
<keyword id="KW-0689">Ribosomal protein</keyword>
<keyword id="KW-0694">RNA-binding</keyword>
<keyword id="KW-0699">rRNA-binding</keyword>
<keyword id="KW-0810">Translation regulation</keyword>
<keyword id="KW-0820">tRNA-binding</keyword>
<reference key="1">
    <citation type="journal article" date="2006" name="PLoS Genet.">
        <title>Who ate whom? Adaptive Helicobacter genomic changes that accompanied a host jump from early humans to large felines.</title>
        <authorList>
            <person name="Eppinger M."/>
            <person name="Baar C."/>
            <person name="Linz B."/>
            <person name="Raddatz G."/>
            <person name="Lanz C."/>
            <person name="Keller H."/>
            <person name="Morelli G."/>
            <person name="Gressmann H."/>
            <person name="Achtman M."/>
            <person name="Schuster S.C."/>
        </authorList>
    </citation>
    <scope>NUCLEOTIDE SEQUENCE [LARGE SCALE GENOMIC DNA]</scope>
    <source>
        <strain>Sheeba</strain>
    </source>
</reference>
<gene>
    <name evidence="1" type="primary">rplA</name>
    <name type="ordered locus">Hac_1581</name>
</gene>